<gene>
    <name type="primary">UL45H</name>
</gene>
<sequence>MMSPTPEDDRDLVVVRGRLRMMDNGAEHDRERRSYTAWPHLCCGCTIGIILTMFVIATTLLLASLFAFSYMSLESGTCPKEWIGLGYSCMRVAGNNATELEALDMCAQHNSKLIDFTNAKTLVEAIVPFGSTNASFGNIFRLRDSRSTCILPTIGGPISVDCPRTCSVVCQRPRPLSTTASIIRDARIYLRLERRDYYEVYSSILSNAIMK</sequence>
<reference key="1">
    <citation type="journal article" date="1989" name="Virus Genes">
        <title>Comparison of the sequence of the secretory glycoprotein A (gA) gene in Md5 and BC-1 strains of Marek's disease virus type 1.</title>
        <authorList>
            <person name="Ihara T."/>
            <person name="Kato A."/>
            <person name="Ueda S."/>
            <person name="Ishihama A."/>
            <person name="Hirai K."/>
        </authorList>
    </citation>
    <scope>NUCLEOTIDE SEQUENCE [GENOMIC DNA]</scope>
</reference>
<protein>
    <recommendedName>
        <fullName>Envelope protein UL45 homolog</fullName>
    </recommendedName>
</protein>
<name>EV45_GAHVB</name>
<keyword id="KW-0325">Glycoprotein</keyword>
<keyword id="KW-0472">Membrane</keyword>
<keyword id="KW-0735">Signal-anchor</keyword>
<keyword id="KW-0812">Transmembrane</keyword>
<keyword id="KW-1133">Transmembrane helix</keyword>
<keyword id="KW-0261">Viral envelope protein</keyword>
<keyword id="KW-0946">Virion</keyword>
<feature type="chain" id="PRO_0000116090" description="Envelope protein UL45 homolog">
    <location>
        <begin position="1"/>
        <end position="211"/>
    </location>
</feature>
<feature type="topological domain" description="Intravirion" evidence="2">
    <location>
        <begin position="1"/>
        <end position="46"/>
    </location>
</feature>
<feature type="transmembrane region" description="Helical; Signal-anchor for type II membrane protein" evidence="2">
    <location>
        <begin position="47"/>
        <end position="67"/>
    </location>
</feature>
<feature type="topological domain" description="Virion surface" evidence="2">
    <location>
        <begin position="68"/>
        <end position="211"/>
    </location>
</feature>
<feature type="glycosylation site" description="N-linked (GlcNAc...) asparagine; by host" evidence="2">
    <location>
        <position position="96"/>
    </location>
</feature>
<feature type="glycosylation site" description="N-linked (GlcNAc...) asparagine; by host" evidence="2">
    <location>
        <position position="133"/>
    </location>
</feature>
<comment type="subcellular location">
    <subcellularLocation>
        <location evidence="1">Virion membrane</location>
        <topology evidence="1">Single-pass type II membrane protein</topology>
    </subcellularLocation>
</comment>
<comment type="similarity">
    <text evidence="3">Belongs to the herpesviridae HHV-1 UL45 family.</text>
</comment>
<dbReference type="EMBL" id="D90002">
    <property type="protein sequence ID" value="BAA14055.1"/>
    <property type="status" value="ALT_SEQ"/>
    <property type="molecule type" value="Genomic_DNA"/>
</dbReference>
<dbReference type="SMR" id="P22652"/>
<dbReference type="GlyCosmos" id="P22652">
    <property type="glycosylation" value="2 sites, No reported glycans"/>
</dbReference>
<dbReference type="GO" id="GO:0016020">
    <property type="term" value="C:membrane"/>
    <property type="evidence" value="ECO:0007669"/>
    <property type="project" value="UniProtKB-KW"/>
</dbReference>
<dbReference type="GO" id="GO:0019031">
    <property type="term" value="C:viral envelope"/>
    <property type="evidence" value="ECO:0007669"/>
    <property type="project" value="UniProtKB-KW"/>
</dbReference>
<dbReference type="GO" id="GO:0055036">
    <property type="term" value="C:virion membrane"/>
    <property type="evidence" value="ECO:0007669"/>
    <property type="project" value="UniProtKB-SubCell"/>
</dbReference>
<dbReference type="InterPro" id="IPR016187">
    <property type="entry name" value="CTDL_fold"/>
</dbReference>
<dbReference type="Pfam" id="PF05473">
    <property type="entry name" value="UL45"/>
    <property type="match status" value="1"/>
</dbReference>
<dbReference type="SUPFAM" id="SSF56436">
    <property type="entry name" value="C-type lectin-like"/>
    <property type="match status" value="1"/>
</dbReference>
<proteinExistence type="inferred from homology"/>
<organism>
    <name type="scientific">Gallid herpesvirus 2 (strain bc-1)</name>
    <name type="common">GaHV-2</name>
    <name type="synonym">Marek's disease herpesvirus type 1</name>
    <dbReference type="NCBI Taxonomy" id="10387"/>
    <lineage>
        <taxon>Viruses</taxon>
        <taxon>Duplodnaviria</taxon>
        <taxon>Heunggongvirae</taxon>
        <taxon>Peploviricota</taxon>
        <taxon>Herviviricetes</taxon>
        <taxon>Herpesvirales</taxon>
        <taxon>Orthoherpesviridae</taxon>
        <taxon>Alphaherpesvirinae</taxon>
        <taxon>Mardivirus</taxon>
        <taxon>Mardivirus gallidalpha2</taxon>
        <taxon>Gallid alphaherpesvirus 2</taxon>
    </lineage>
</organism>
<accession>P22652</accession>
<evidence type="ECO:0000250" key="1"/>
<evidence type="ECO:0000255" key="2"/>
<evidence type="ECO:0000305" key="3"/>
<organismHost>
    <name type="scientific">Gallus gallus</name>
    <name type="common">Chicken</name>
    <dbReference type="NCBI Taxonomy" id="9031"/>
</organismHost>